<proteinExistence type="evidence at protein level"/>
<organism>
    <name type="scientific">Blautia hydrogenotrophica (strain DSM 10507 / JCM 14656 / S5a33)</name>
    <name type="common">Ruminococcus hydrogenotrophicus</name>
    <dbReference type="NCBI Taxonomy" id="476272"/>
    <lineage>
        <taxon>Bacteria</taxon>
        <taxon>Bacillati</taxon>
        <taxon>Bacillota</taxon>
        <taxon>Clostridia</taxon>
        <taxon>Lachnospirales</taxon>
        <taxon>Lachnospiraceae</taxon>
        <taxon>Blautia</taxon>
    </lineage>
</organism>
<reference key="1">
    <citation type="submission" date="2009-01" db="EMBL/GenBank/DDBJ databases">
        <authorList>
            <person name="Fulton L."/>
            <person name="Clifton S."/>
            <person name="Fulton B."/>
            <person name="Xu J."/>
            <person name="Minx P."/>
            <person name="Pepin K.H."/>
            <person name="Johnson M."/>
            <person name="Bhonagiri V."/>
            <person name="Nash W.E."/>
            <person name="Mardis E.R."/>
            <person name="Wilson R.K."/>
        </authorList>
    </citation>
    <scope>NUCLEOTIDE SEQUENCE [LARGE SCALE GENOMIC DNA]</scope>
    <source>
        <strain>DSM 10507 / JCM 14656 / S5a33</strain>
    </source>
</reference>
<reference key="2">
    <citation type="submission" date="2009-02" db="EMBL/GenBank/DDBJ databases">
        <title>Draft genome sequence of Blautia hydrogenotrophica DSM 10507 (Ruminococcus hydrogenotrophicus DSM 10507).</title>
        <authorList>
            <person name="Sudarsanam P."/>
            <person name="Ley R."/>
            <person name="Guruge J."/>
            <person name="Turnbaugh P.J."/>
            <person name="Mahowald M."/>
            <person name="Liep D."/>
            <person name="Gordon J."/>
        </authorList>
    </citation>
    <scope>NUCLEOTIDE SEQUENCE [LARGE SCALE GENOMIC DNA]</scope>
    <source>
        <strain>DSM 10507 / JCM 14656 / S5a33</strain>
    </source>
</reference>
<reference key="3">
    <citation type="journal article" date="2018" name="Nat. Chem. Biol.">
        <title>Functional assignment of multiple catabolic pathways for D-apiose.</title>
        <authorList>
            <person name="Carter M.S."/>
            <person name="Zhang X."/>
            <person name="Huang H."/>
            <person name="Bouvier J.T."/>
            <person name="Francisco B.S."/>
            <person name="Vetting M.W."/>
            <person name="Al-Obaidi N."/>
            <person name="Bonanno J.B."/>
            <person name="Ghosh A."/>
            <person name="Zallot R.G."/>
            <person name="Andersen H.M."/>
            <person name="Almo S.C."/>
            <person name="Gerlt J.A."/>
        </authorList>
    </citation>
    <scope>FUNCTION</scope>
    <scope>CATALYTIC ACTIVITY</scope>
    <scope>BIOPHYSICOCHEMICAL PROPERTIES</scope>
    <scope>PATHWAY</scope>
</reference>
<protein>
    <recommendedName>
        <fullName evidence="3">D-apionate oxidoisomerase</fullName>
        <ecNumber evidence="2">1.1.1.421</ecNumber>
    </recommendedName>
</protein>
<sequence length="287" mass="31231">MGKIVVSVIGAGGKMGTRTSNNLAKKPEEFDLLLVEASEAGIQSIKDRGFEPTPVEEALEKSDVVVFAVPDTLIGKLSAIYVPQLKPGTGFIILDPAAAVARELTLRDDCTFGVAHPCHPSYFLDQDTYEARQDRFGGCGGKQDIVMSKIQGNDDRFAQCVEVAKQMYAPVEHAYVMSSEQIAFLEPTLVELLGATCLYAMAETVDEAVKRGIPKEAAVSFLTGHIYNLSANFLGYIPGNPPVSDACKVAIGLGNRLVMREDWKKIWDDEVLNKVIATMLHPDKPQI</sequence>
<evidence type="ECO:0000250" key="1">
    <source>
        <dbReference type="UniProtKB" id="F8GV06"/>
    </source>
</evidence>
<evidence type="ECO:0000269" key="2">
    <source>
    </source>
</evidence>
<evidence type="ECO:0000303" key="3">
    <source>
    </source>
</evidence>
<evidence type="ECO:0000305" key="4"/>
<evidence type="ECO:0000312" key="5">
    <source>
        <dbReference type="EMBL" id="EEG48952.1"/>
    </source>
</evidence>
<comment type="function">
    <text evidence="2">Involved in catabolism of D-apiose. Catalyzes the conversion of D-apionate to 3-oxo-isoapionate.</text>
</comment>
<comment type="catalytic activity">
    <reaction evidence="2">
        <text>D-apionate + NAD(+) = 3-oxoisoapionate + NADH + H(+)</text>
        <dbReference type="Rhea" id="RHEA:57044"/>
        <dbReference type="ChEBI" id="CHEBI:15378"/>
        <dbReference type="ChEBI" id="CHEBI:57540"/>
        <dbReference type="ChEBI" id="CHEBI:57945"/>
        <dbReference type="ChEBI" id="CHEBI:141352"/>
        <dbReference type="ChEBI" id="CHEBI:141353"/>
        <dbReference type="EC" id="1.1.1.421"/>
    </reaction>
</comment>
<comment type="cofactor">
    <cofactor evidence="1">
        <name>Zn(2+)</name>
        <dbReference type="ChEBI" id="CHEBI:29105"/>
    </cofactor>
</comment>
<comment type="biophysicochemical properties">
    <kinetics>
        <KM evidence="2">0.25 mM for D-apionate</KM>
        <text evidence="2">kcat is 0.32 sec(-1).</text>
    </kinetics>
</comment>
<comment type="pathway">
    <text evidence="2">Carbohydrate metabolism.</text>
</comment>
<comment type="similarity">
    <text evidence="4">Belongs to the ApnO family.</text>
</comment>
<dbReference type="EC" id="1.1.1.421" evidence="2"/>
<dbReference type="EMBL" id="ACBZ01000114">
    <property type="protein sequence ID" value="EEG48952.1"/>
    <property type="molecule type" value="Genomic_DNA"/>
</dbReference>
<dbReference type="RefSeq" id="WP_005949243.1">
    <property type="nucleotide sequence ID" value="NZ_CP136423.1"/>
</dbReference>
<dbReference type="SMR" id="C0CMQ7"/>
<dbReference type="GeneID" id="86820930"/>
<dbReference type="PATRIC" id="fig|476272.21.peg.1574"/>
<dbReference type="eggNOG" id="COG0287">
    <property type="taxonomic scope" value="Bacteria"/>
</dbReference>
<dbReference type="HOGENOM" id="CLU_087850_0_0_9"/>
<dbReference type="BRENDA" id="1.1.1.421">
    <property type="organism ID" value="17157"/>
</dbReference>
<dbReference type="SABIO-RK" id="C0CMQ7"/>
<dbReference type="Proteomes" id="UP000003100">
    <property type="component" value="Unassembled WGS sequence"/>
</dbReference>
<dbReference type="GO" id="GO:0046872">
    <property type="term" value="F:metal ion binding"/>
    <property type="evidence" value="ECO:0007669"/>
    <property type="project" value="UniProtKB-KW"/>
</dbReference>
<dbReference type="GO" id="GO:0000166">
    <property type="term" value="F:nucleotide binding"/>
    <property type="evidence" value="ECO:0007669"/>
    <property type="project" value="UniProtKB-KW"/>
</dbReference>
<dbReference type="GO" id="GO:0016491">
    <property type="term" value="F:oxidoreductase activity"/>
    <property type="evidence" value="ECO:0007669"/>
    <property type="project" value="UniProtKB-KW"/>
</dbReference>
<dbReference type="Gene3D" id="3.40.50.720">
    <property type="entry name" value="NAD(P)-binding Rossmann-like Domain"/>
    <property type="match status" value="1"/>
</dbReference>
<dbReference type="Gene3D" id="1.10.3640.10">
    <property type="entry name" value="Semialdehyde dehydrogenase-like, C-terminal"/>
    <property type="match status" value="1"/>
</dbReference>
<dbReference type="InterPro" id="IPR013116">
    <property type="entry name" value="KARI_N"/>
</dbReference>
<dbReference type="InterPro" id="IPR036291">
    <property type="entry name" value="NAD(P)-bd_dom_sf"/>
</dbReference>
<dbReference type="InterPro" id="IPR031663">
    <property type="entry name" value="PGDH_C"/>
</dbReference>
<dbReference type="InterPro" id="IPR037161">
    <property type="entry name" value="Semialdehyde_DH-like_C"/>
</dbReference>
<dbReference type="Pfam" id="PF07991">
    <property type="entry name" value="KARI_N"/>
    <property type="match status" value="1"/>
</dbReference>
<dbReference type="Pfam" id="PF16896">
    <property type="entry name" value="PGDH_C"/>
    <property type="match status" value="1"/>
</dbReference>
<dbReference type="SUPFAM" id="SSF51735">
    <property type="entry name" value="NAD(P)-binding Rossmann-fold domains"/>
    <property type="match status" value="1"/>
</dbReference>
<name>APNO_BLAHS</name>
<gene>
    <name evidence="3" type="primary">apnO</name>
    <name evidence="5" type="ORF">RUMHYD_02142</name>
</gene>
<keyword id="KW-0119">Carbohydrate metabolism</keyword>
<keyword id="KW-0479">Metal-binding</keyword>
<keyword id="KW-0520">NAD</keyword>
<keyword id="KW-0547">Nucleotide-binding</keyword>
<keyword id="KW-0560">Oxidoreductase</keyword>
<keyword id="KW-1185">Reference proteome</keyword>
<keyword id="KW-0862">Zinc</keyword>
<feature type="chain" id="PRO_0000446030" description="D-apionate oxidoisomerase">
    <location>
        <begin position="1"/>
        <end position="287"/>
    </location>
</feature>
<feature type="binding site" evidence="1">
    <location>
        <begin position="13"/>
        <end position="15"/>
    </location>
    <ligand>
        <name>NAD(+)</name>
        <dbReference type="ChEBI" id="CHEBI:57540"/>
    </ligand>
</feature>
<feature type="binding site" evidence="1">
    <location>
        <position position="36"/>
    </location>
    <ligand>
        <name>NAD(+)</name>
        <dbReference type="ChEBI" id="CHEBI:57540"/>
    </ligand>
</feature>
<feature type="binding site" evidence="1">
    <location>
        <position position="71"/>
    </location>
    <ligand>
        <name>NAD(+)</name>
        <dbReference type="ChEBI" id="CHEBI:57540"/>
    </ligand>
</feature>
<feature type="binding site" evidence="1">
    <location>
        <position position="116"/>
    </location>
    <ligand>
        <name>Zn(2+)</name>
        <dbReference type="ChEBI" id="CHEBI:29105"/>
    </ligand>
</feature>
<feature type="binding site" evidence="1">
    <location>
        <position position="186"/>
    </location>
    <ligand>
        <name>Zn(2+)</name>
        <dbReference type="ChEBI" id="CHEBI:29105"/>
    </ligand>
</feature>
<accession>C0CMQ7</accession>